<dbReference type="EC" id="6.1.1.15" evidence="1"/>
<dbReference type="EMBL" id="CP001339">
    <property type="protein sequence ID" value="ACL72211.1"/>
    <property type="molecule type" value="Genomic_DNA"/>
</dbReference>
<dbReference type="RefSeq" id="WP_012637695.1">
    <property type="nucleotide sequence ID" value="NC_011901.1"/>
</dbReference>
<dbReference type="SMR" id="B8GPP4"/>
<dbReference type="STRING" id="396588.Tgr7_1125"/>
<dbReference type="KEGG" id="tgr:Tgr7_1125"/>
<dbReference type="eggNOG" id="COG0442">
    <property type="taxonomic scope" value="Bacteria"/>
</dbReference>
<dbReference type="HOGENOM" id="CLU_016739_0_0_6"/>
<dbReference type="OrthoDB" id="9809052at2"/>
<dbReference type="Proteomes" id="UP000002383">
    <property type="component" value="Chromosome"/>
</dbReference>
<dbReference type="GO" id="GO:0005829">
    <property type="term" value="C:cytosol"/>
    <property type="evidence" value="ECO:0007669"/>
    <property type="project" value="TreeGrafter"/>
</dbReference>
<dbReference type="GO" id="GO:0002161">
    <property type="term" value="F:aminoacyl-tRNA deacylase activity"/>
    <property type="evidence" value="ECO:0007669"/>
    <property type="project" value="InterPro"/>
</dbReference>
<dbReference type="GO" id="GO:0005524">
    <property type="term" value="F:ATP binding"/>
    <property type="evidence" value="ECO:0007669"/>
    <property type="project" value="UniProtKB-UniRule"/>
</dbReference>
<dbReference type="GO" id="GO:0004827">
    <property type="term" value="F:proline-tRNA ligase activity"/>
    <property type="evidence" value="ECO:0007669"/>
    <property type="project" value="UniProtKB-UniRule"/>
</dbReference>
<dbReference type="GO" id="GO:0006433">
    <property type="term" value="P:prolyl-tRNA aminoacylation"/>
    <property type="evidence" value="ECO:0007669"/>
    <property type="project" value="UniProtKB-UniRule"/>
</dbReference>
<dbReference type="CDD" id="cd04334">
    <property type="entry name" value="ProRS-INS"/>
    <property type="match status" value="1"/>
</dbReference>
<dbReference type="CDD" id="cd00861">
    <property type="entry name" value="ProRS_anticodon_short"/>
    <property type="match status" value="1"/>
</dbReference>
<dbReference type="CDD" id="cd00779">
    <property type="entry name" value="ProRS_core_prok"/>
    <property type="match status" value="1"/>
</dbReference>
<dbReference type="FunFam" id="3.30.930.10:FF:000043">
    <property type="entry name" value="Proline--tRNA ligase"/>
    <property type="match status" value="1"/>
</dbReference>
<dbReference type="FunFam" id="3.30.930.10:FF:000097">
    <property type="entry name" value="Proline--tRNA ligase"/>
    <property type="match status" value="1"/>
</dbReference>
<dbReference type="FunFam" id="3.90.960.10:FF:000001">
    <property type="entry name" value="Proline--tRNA ligase"/>
    <property type="match status" value="1"/>
</dbReference>
<dbReference type="Gene3D" id="3.40.50.800">
    <property type="entry name" value="Anticodon-binding domain"/>
    <property type="match status" value="1"/>
</dbReference>
<dbReference type="Gene3D" id="3.30.930.10">
    <property type="entry name" value="Bira Bifunctional Protein, Domain 2"/>
    <property type="match status" value="2"/>
</dbReference>
<dbReference type="HAMAP" id="MF_01569">
    <property type="entry name" value="Pro_tRNA_synth_type1"/>
    <property type="match status" value="1"/>
</dbReference>
<dbReference type="InterPro" id="IPR002314">
    <property type="entry name" value="aa-tRNA-synt_IIb"/>
</dbReference>
<dbReference type="InterPro" id="IPR006195">
    <property type="entry name" value="aa-tRNA-synth_II"/>
</dbReference>
<dbReference type="InterPro" id="IPR045864">
    <property type="entry name" value="aa-tRNA-synth_II/BPL/LPL"/>
</dbReference>
<dbReference type="InterPro" id="IPR004154">
    <property type="entry name" value="Anticodon-bd"/>
</dbReference>
<dbReference type="InterPro" id="IPR036621">
    <property type="entry name" value="Anticodon-bd_dom_sf"/>
</dbReference>
<dbReference type="InterPro" id="IPR002316">
    <property type="entry name" value="Pro-tRNA-ligase_IIa"/>
</dbReference>
<dbReference type="InterPro" id="IPR004500">
    <property type="entry name" value="Pro-tRNA-synth_IIa_bac-type"/>
</dbReference>
<dbReference type="InterPro" id="IPR023717">
    <property type="entry name" value="Pro-tRNA-Synthase_IIa_type1"/>
</dbReference>
<dbReference type="InterPro" id="IPR050062">
    <property type="entry name" value="Pro-tRNA_synthetase"/>
</dbReference>
<dbReference type="InterPro" id="IPR044140">
    <property type="entry name" value="ProRS_anticodon_short"/>
</dbReference>
<dbReference type="InterPro" id="IPR033730">
    <property type="entry name" value="ProRS_core_prok"/>
</dbReference>
<dbReference type="InterPro" id="IPR036754">
    <property type="entry name" value="YbaK/aa-tRNA-synt-asso_dom_sf"/>
</dbReference>
<dbReference type="InterPro" id="IPR007214">
    <property type="entry name" value="YbaK/aa-tRNA-synth-assoc-dom"/>
</dbReference>
<dbReference type="NCBIfam" id="NF006625">
    <property type="entry name" value="PRK09194.1"/>
    <property type="match status" value="1"/>
</dbReference>
<dbReference type="NCBIfam" id="TIGR00409">
    <property type="entry name" value="proS_fam_II"/>
    <property type="match status" value="1"/>
</dbReference>
<dbReference type="PANTHER" id="PTHR42753">
    <property type="entry name" value="MITOCHONDRIAL RIBOSOME PROTEIN L39/PROLYL-TRNA LIGASE FAMILY MEMBER"/>
    <property type="match status" value="1"/>
</dbReference>
<dbReference type="PANTHER" id="PTHR42753:SF2">
    <property type="entry name" value="PROLINE--TRNA LIGASE"/>
    <property type="match status" value="1"/>
</dbReference>
<dbReference type="Pfam" id="PF03129">
    <property type="entry name" value="HGTP_anticodon"/>
    <property type="match status" value="1"/>
</dbReference>
<dbReference type="Pfam" id="PF00587">
    <property type="entry name" value="tRNA-synt_2b"/>
    <property type="match status" value="1"/>
</dbReference>
<dbReference type="Pfam" id="PF04073">
    <property type="entry name" value="tRNA_edit"/>
    <property type="match status" value="1"/>
</dbReference>
<dbReference type="PIRSF" id="PIRSF001535">
    <property type="entry name" value="ProRS_1"/>
    <property type="match status" value="1"/>
</dbReference>
<dbReference type="PRINTS" id="PR01046">
    <property type="entry name" value="TRNASYNTHPRO"/>
</dbReference>
<dbReference type="SUPFAM" id="SSF52954">
    <property type="entry name" value="Class II aaRS ABD-related"/>
    <property type="match status" value="1"/>
</dbReference>
<dbReference type="SUPFAM" id="SSF55681">
    <property type="entry name" value="Class II aaRS and biotin synthetases"/>
    <property type="match status" value="1"/>
</dbReference>
<dbReference type="SUPFAM" id="SSF55826">
    <property type="entry name" value="YbaK/ProRS associated domain"/>
    <property type="match status" value="1"/>
</dbReference>
<dbReference type="PROSITE" id="PS50862">
    <property type="entry name" value="AA_TRNA_LIGASE_II"/>
    <property type="match status" value="1"/>
</dbReference>
<reference key="1">
    <citation type="journal article" date="2011" name="Stand. Genomic Sci.">
        <title>Complete genome sequence of 'Thioalkalivibrio sulfidophilus' HL-EbGr7.</title>
        <authorList>
            <person name="Muyzer G."/>
            <person name="Sorokin D.Y."/>
            <person name="Mavromatis K."/>
            <person name="Lapidus A."/>
            <person name="Clum A."/>
            <person name="Ivanova N."/>
            <person name="Pati A."/>
            <person name="d'Haeseleer P."/>
            <person name="Woyke T."/>
            <person name="Kyrpides N.C."/>
        </authorList>
    </citation>
    <scope>NUCLEOTIDE SEQUENCE [LARGE SCALE GENOMIC DNA]</scope>
    <source>
        <strain>HL-EbGR7</strain>
    </source>
</reference>
<accession>B8GPP4</accession>
<name>SYP_THISH</name>
<organism>
    <name type="scientific">Thioalkalivibrio sulfidiphilus (strain HL-EbGR7)</name>
    <dbReference type="NCBI Taxonomy" id="396588"/>
    <lineage>
        <taxon>Bacteria</taxon>
        <taxon>Pseudomonadati</taxon>
        <taxon>Pseudomonadota</taxon>
        <taxon>Gammaproteobacteria</taxon>
        <taxon>Chromatiales</taxon>
        <taxon>Ectothiorhodospiraceae</taxon>
        <taxon>Thioalkalivibrio</taxon>
    </lineage>
</organism>
<proteinExistence type="inferred from homology"/>
<protein>
    <recommendedName>
        <fullName evidence="1">Proline--tRNA ligase</fullName>
        <ecNumber evidence="1">6.1.1.15</ecNumber>
    </recommendedName>
    <alternativeName>
        <fullName evidence="1">Prolyl-tRNA synthetase</fullName>
        <shortName evidence="1">ProRS</shortName>
    </alternativeName>
</protein>
<sequence>MRATRFPLATLKETPADAEVISHQLMLRAGMIRRLASGLYSWTPLGLRVLRKVEGLVRDEMDRAGALELLMPAVQPAELWQESGRWEQYGPELLRLKDRHMREFCFGPTHEEVITDYVRREVKSYRQLPVNYYQIQTKFRDEIRPRFGVMRAREFLMKDAYSFHVDEDSLKETYARMHEAYTRIFTRCGLDFRAVLADTGSIGGNASHEFHVLADSGEDAIAFSDVSDYAANVELAEAVAPATERAAPGEAMRLVDTPNARTIADLVEQHGLAIEKTVKTLVVAAAEGAEAPLIALLVRGDHELNAIKAEKLPQVASPLRMATEEEIRAAIGAGPGSLGPVNLPIPCVVDRAVALMSDFGAGANIDGKHYFGINWERDLALPPVADLRNVVAGDPSPDGQGSLQIRRGIEVGHIFQLGRKYSEAMGATVLDEQGRSLVVTMGCYGIGVSRVVAAAIEQNHDAQGIIWPEALAPFTVALCPINAQKSQRLREAADALYERLLNAGFEVFYDDRGLRPGAMFADMELIGIPHRLVLGERGLDAGEIEYKGRRDTDTTQVALDGVLDFLRQRMNAAH</sequence>
<keyword id="KW-0030">Aminoacyl-tRNA synthetase</keyword>
<keyword id="KW-0067">ATP-binding</keyword>
<keyword id="KW-0963">Cytoplasm</keyword>
<keyword id="KW-0436">Ligase</keyword>
<keyword id="KW-0547">Nucleotide-binding</keyword>
<keyword id="KW-0648">Protein biosynthesis</keyword>
<keyword id="KW-1185">Reference proteome</keyword>
<evidence type="ECO:0000255" key="1">
    <source>
        <dbReference type="HAMAP-Rule" id="MF_01569"/>
    </source>
</evidence>
<comment type="function">
    <text evidence="1">Catalyzes the attachment of proline to tRNA(Pro) in a two-step reaction: proline is first activated by ATP to form Pro-AMP and then transferred to the acceptor end of tRNA(Pro). As ProRS can inadvertently accommodate and process non-cognate amino acids such as alanine and cysteine, to avoid such errors it has two additional distinct editing activities against alanine. One activity is designated as 'pretransfer' editing and involves the tRNA(Pro)-independent hydrolysis of activated Ala-AMP. The other activity is designated 'posttransfer' editing and involves deacylation of mischarged Ala-tRNA(Pro). The misacylated Cys-tRNA(Pro) is not edited by ProRS.</text>
</comment>
<comment type="catalytic activity">
    <reaction evidence="1">
        <text>tRNA(Pro) + L-proline + ATP = L-prolyl-tRNA(Pro) + AMP + diphosphate</text>
        <dbReference type="Rhea" id="RHEA:14305"/>
        <dbReference type="Rhea" id="RHEA-COMP:9700"/>
        <dbReference type="Rhea" id="RHEA-COMP:9702"/>
        <dbReference type="ChEBI" id="CHEBI:30616"/>
        <dbReference type="ChEBI" id="CHEBI:33019"/>
        <dbReference type="ChEBI" id="CHEBI:60039"/>
        <dbReference type="ChEBI" id="CHEBI:78442"/>
        <dbReference type="ChEBI" id="CHEBI:78532"/>
        <dbReference type="ChEBI" id="CHEBI:456215"/>
        <dbReference type="EC" id="6.1.1.15"/>
    </reaction>
</comment>
<comment type="subunit">
    <text evidence="1">Homodimer.</text>
</comment>
<comment type="subcellular location">
    <subcellularLocation>
        <location evidence="1">Cytoplasm</location>
    </subcellularLocation>
</comment>
<comment type="domain">
    <text evidence="1">Consists of three domains: the N-terminal catalytic domain, the editing domain and the C-terminal anticodon-binding domain.</text>
</comment>
<comment type="similarity">
    <text evidence="1">Belongs to the class-II aminoacyl-tRNA synthetase family. ProS type 1 subfamily.</text>
</comment>
<gene>
    <name evidence="1" type="primary">proS</name>
    <name type="ordered locus">Tgr7_1125</name>
</gene>
<feature type="chain" id="PRO_1000185520" description="Proline--tRNA ligase">
    <location>
        <begin position="1"/>
        <end position="574"/>
    </location>
</feature>